<organism>
    <name type="scientific">Pseudomonas syringae pv. syringae (strain B728a)</name>
    <dbReference type="NCBI Taxonomy" id="205918"/>
    <lineage>
        <taxon>Bacteria</taxon>
        <taxon>Pseudomonadati</taxon>
        <taxon>Pseudomonadota</taxon>
        <taxon>Gammaproteobacteria</taxon>
        <taxon>Pseudomonadales</taxon>
        <taxon>Pseudomonadaceae</taxon>
        <taxon>Pseudomonas</taxon>
        <taxon>Pseudomonas syringae</taxon>
    </lineage>
</organism>
<accession>Q4ZNS7</accession>
<protein>
    <recommendedName>
        <fullName evidence="1">Glutamyl-tRNA(Gln) amidotransferase subunit A</fullName>
        <shortName evidence="1">Glu-ADT subunit A</shortName>
        <ecNumber evidence="1">6.3.5.7</ecNumber>
    </recommendedName>
</protein>
<name>GATA_PSEU2</name>
<evidence type="ECO:0000255" key="1">
    <source>
        <dbReference type="HAMAP-Rule" id="MF_00120"/>
    </source>
</evidence>
<sequence>MHQMTLAEIARGLADKKFSSEELTRVLLSRIATLDPQLNSFISLTEDLAITQAQAADARRAAGENGPLLGAPLAHKDLFCTQGIRTSCGSLMLDNFKAPYDATVVSRLASAGTVTLGKTNMDEFAMGSANESSHYGAVKNPWNLECVPGGSSGGSAAAVAARLLPAATGTDTGGSIRQPAALTNLTGLKPTYGRVSRWGMIAYASSLDQAGPMARTAEDCALLLQGMAGFDPQDSTSIDEPVPDYSASLNTSLKGLRIGVPKEYFSAGLDPRIAQLVHESVRELEKLGAIVKEVSLPNLQHAIPAYYVIAPAEASSNLSRFDGVRFGYRCEDPKDLTDLYKRSRAEGFGPEVQRRIMVGAYALSAGYYDAYYLQAQKIRRLIKNDFMNAFADVDVILGPTTPNPAWKIGAKTHDPIAEYLEDFYTITANLAGLPGLSMPAGFVDGLPVGVQLLAPYFQEGRLLNVAHQYQQVTDWHTRAPEGF</sequence>
<dbReference type="EC" id="6.3.5.7" evidence="1"/>
<dbReference type="EMBL" id="CP000075">
    <property type="protein sequence ID" value="AAY39195.1"/>
    <property type="molecule type" value="Genomic_DNA"/>
</dbReference>
<dbReference type="RefSeq" id="WP_011268870.1">
    <property type="nucleotide sequence ID" value="NC_007005.1"/>
</dbReference>
<dbReference type="RefSeq" id="YP_237233.1">
    <property type="nucleotide sequence ID" value="NC_007005.1"/>
</dbReference>
<dbReference type="SMR" id="Q4ZNS7"/>
<dbReference type="STRING" id="205918.Psyr_4165"/>
<dbReference type="KEGG" id="psb:Psyr_4165"/>
<dbReference type="PATRIC" id="fig|205918.7.peg.4291"/>
<dbReference type="eggNOG" id="COG0154">
    <property type="taxonomic scope" value="Bacteria"/>
</dbReference>
<dbReference type="HOGENOM" id="CLU_009600_0_3_6"/>
<dbReference type="OrthoDB" id="9811471at2"/>
<dbReference type="Proteomes" id="UP000000426">
    <property type="component" value="Chromosome"/>
</dbReference>
<dbReference type="GO" id="GO:0030956">
    <property type="term" value="C:glutamyl-tRNA(Gln) amidotransferase complex"/>
    <property type="evidence" value="ECO:0007669"/>
    <property type="project" value="InterPro"/>
</dbReference>
<dbReference type="GO" id="GO:0005524">
    <property type="term" value="F:ATP binding"/>
    <property type="evidence" value="ECO:0007669"/>
    <property type="project" value="UniProtKB-KW"/>
</dbReference>
<dbReference type="GO" id="GO:0050567">
    <property type="term" value="F:glutaminyl-tRNA synthase (glutamine-hydrolyzing) activity"/>
    <property type="evidence" value="ECO:0007669"/>
    <property type="project" value="UniProtKB-UniRule"/>
</dbReference>
<dbReference type="GO" id="GO:0006412">
    <property type="term" value="P:translation"/>
    <property type="evidence" value="ECO:0007669"/>
    <property type="project" value="UniProtKB-UniRule"/>
</dbReference>
<dbReference type="Gene3D" id="3.90.1300.10">
    <property type="entry name" value="Amidase signature (AS) domain"/>
    <property type="match status" value="1"/>
</dbReference>
<dbReference type="HAMAP" id="MF_00120">
    <property type="entry name" value="GatA"/>
    <property type="match status" value="1"/>
</dbReference>
<dbReference type="InterPro" id="IPR000120">
    <property type="entry name" value="Amidase"/>
</dbReference>
<dbReference type="InterPro" id="IPR020556">
    <property type="entry name" value="Amidase_CS"/>
</dbReference>
<dbReference type="InterPro" id="IPR023631">
    <property type="entry name" value="Amidase_dom"/>
</dbReference>
<dbReference type="InterPro" id="IPR036928">
    <property type="entry name" value="AS_sf"/>
</dbReference>
<dbReference type="InterPro" id="IPR004412">
    <property type="entry name" value="GatA"/>
</dbReference>
<dbReference type="NCBIfam" id="TIGR00132">
    <property type="entry name" value="gatA"/>
    <property type="match status" value="1"/>
</dbReference>
<dbReference type="PANTHER" id="PTHR11895:SF151">
    <property type="entry name" value="GLUTAMYL-TRNA(GLN) AMIDOTRANSFERASE SUBUNIT A"/>
    <property type="match status" value="1"/>
</dbReference>
<dbReference type="PANTHER" id="PTHR11895">
    <property type="entry name" value="TRANSAMIDASE"/>
    <property type="match status" value="1"/>
</dbReference>
<dbReference type="Pfam" id="PF01425">
    <property type="entry name" value="Amidase"/>
    <property type="match status" value="1"/>
</dbReference>
<dbReference type="SUPFAM" id="SSF75304">
    <property type="entry name" value="Amidase signature (AS) enzymes"/>
    <property type="match status" value="1"/>
</dbReference>
<dbReference type="PROSITE" id="PS00571">
    <property type="entry name" value="AMIDASES"/>
    <property type="match status" value="1"/>
</dbReference>
<feature type="chain" id="PRO_0000241137" description="Glutamyl-tRNA(Gln) amidotransferase subunit A">
    <location>
        <begin position="1"/>
        <end position="483"/>
    </location>
</feature>
<feature type="active site" description="Charge relay system" evidence="1">
    <location>
        <position position="76"/>
    </location>
</feature>
<feature type="active site" description="Charge relay system" evidence="1">
    <location>
        <position position="151"/>
    </location>
</feature>
<feature type="active site" description="Acyl-ester intermediate" evidence="1">
    <location>
        <position position="175"/>
    </location>
</feature>
<gene>
    <name evidence="1" type="primary">gatA</name>
    <name type="ordered locus">Psyr_4165</name>
</gene>
<proteinExistence type="inferred from homology"/>
<reference key="1">
    <citation type="journal article" date="2005" name="Proc. Natl. Acad. Sci. U.S.A.">
        <title>Comparison of the complete genome sequences of Pseudomonas syringae pv. syringae B728a and pv. tomato DC3000.</title>
        <authorList>
            <person name="Feil H."/>
            <person name="Feil W.S."/>
            <person name="Chain P."/>
            <person name="Larimer F."/>
            <person name="Dibartolo G."/>
            <person name="Copeland A."/>
            <person name="Lykidis A."/>
            <person name="Trong S."/>
            <person name="Nolan M."/>
            <person name="Goltsman E."/>
            <person name="Thiel J."/>
            <person name="Malfatti S."/>
            <person name="Loper J.E."/>
            <person name="Lapidus A."/>
            <person name="Detter J.C."/>
            <person name="Land M."/>
            <person name="Richardson P.M."/>
            <person name="Kyrpides N.C."/>
            <person name="Ivanova N."/>
            <person name="Lindow S.E."/>
        </authorList>
    </citation>
    <scope>NUCLEOTIDE SEQUENCE [LARGE SCALE GENOMIC DNA]</scope>
    <source>
        <strain>B728a</strain>
    </source>
</reference>
<comment type="function">
    <text evidence="1">Allows the formation of correctly charged Gln-tRNA(Gln) through the transamidation of misacylated Glu-tRNA(Gln) in organisms which lack glutaminyl-tRNA synthetase. The reaction takes place in the presence of glutamine and ATP through an activated gamma-phospho-Glu-tRNA(Gln).</text>
</comment>
<comment type="catalytic activity">
    <reaction evidence="1">
        <text>L-glutamyl-tRNA(Gln) + L-glutamine + ATP + H2O = L-glutaminyl-tRNA(Gln) + L-glutamate + ADP + phosphate + H(+)</text>
        <dbReference type="Rhea" id="RHEA:17521"/>
        <dbReference type="Rhea" id="RHEA-COMP:9681"/>
        <dbReference type="Rhea" id="RHEA-COMP:9684"/>
        <dbReference type="ChEBI" id="CHEBI:15377"/>
        <dbReference type="ChEBI" id="CHEBI:15378"/>
        <dbReference type="ChEBI" id="CHEBI:29985"/>
        <dbReference type="ChEBI" id="CHEBI:30616"/>
        <dbReference type="ChEBI" id="CHEBI:43474"/>
        <dbReference type="ChEBI" id="CHEBI:58359"/>
        <dbReference type="ChEBI" id="CHEBI:78520"/>
        <dbReference type="ChEBI" id="CHEBI:78521"/>
        <dbReference type="ChEBI" id="CHEBI:456216"/>
        <dbReference type="EC" id="6.3.5.7"/>
    </reaction>
</comment>
<comment type="subunit">
    <text evidence="1">Heterotrimer of A, B and C subunits.</text>
</comment>
<comment type="similarity">
    <text evidence="1">Belongs to the amidase family. GatA subfamily.</text>
</comment>
<keyword id="KW-0067">ATP-binding</keyword>
<keyword id="KW-0436">Ligase</keyword>
<keyword id="KW-0547">Nucleotide-binding</keyword>
<keyword id="KW-0648">Protein biosynthesis</keyword>